<feature type="chain" id="PRO_0000120952" description="Vacuolar protein sorting-associated protein 28 homolog">
    <location>
        <begin position="1"/>
        <end position="221"/>
    </location>
</feature>
<feature type="domain" description="VPS28 N-terminal" evidence="4">
    <location>
        <begin position="13"/>
        <end position="120"/>
    </location>
</feature>
<feature type="domain" description="VPS28 C-terminal" evidence="3">
    <location>
        <begin position="124"/>
        <end position="220"/>
    </location>
</feature>
<feature type="modified residue" description="N-acetylmethionine" evidence="2">
    <location>
        <position position="1"/>
    </location>
</feature>
<reference key="1">
    <citation type="journal article" date="2003" name="J. Cell Biol.">
        <title>Identification of a novel antiapoptotic protein that antagonizes ASK1 and CAD activities.</title>
        <authorList>
            <person name="Cho S.-G."/>
            <person name="Kim J.W."/>
            <person name="Lee Y.H."/>
            <person name="Hwang H.S."/>
            <person name="Kim M.S."/>
            <person name="Ryoo K."/>
            <person name="Kim M.J."/>
            <person name="Noh K.T."/>
            <person name="Kim E.K."/>
            <person name="Cho J.H."/>
            <person name="Yoon K.W."/>
            <person name="Cho E.G."/>
            <person name="Park H.S."/>
            <person name="Chi S.W."/>
            <person name="Lee M.J."/>
            <person name="Kang S.S."/>
            <person name="Ichijo H."/>
            <person name="Choi E.J."/>
        </authorList>
    </citation>
    <scope>NUCLEOTIDE SEQUENCE [MRNA]</scope>
    <source>
        <strain>BALB/cJ</strain>
    </source>
</reference>
<reference key="2">
    <citation type="journal article" date="2005" name="Science">
        <title>The transcriptional landscape of the mammalian genome.</title>
        <authorList>
            <person name="Carninci P."/>
            <person name="Kasukawa T."/>
            <person name="Katayama S."/>
            <person name="Gough J."/>
            <person name="Frith M.C."/>
            <person name="Maeda N."/>
            <person name="Oyama R."/>
            <person name="Ravasi T."/>
            <person name="Lenhard B."/>
            <person name="Wells C."/>
            <person name="Kodzius R."/>
            <person name="Shimokawa K."/>
            <person name="Bajic V.B."/>
            <person name="Brenner S.E."/>
            <person name="Batalov S."/>
            <person name="Forrest A.R."/>
            <person name="Zavolan M."/>
            <person name="Davis M.J."/>
            <person name="Wilming L.G."/>
            <person name="Aidinis V."/>
            <person name="Allen J.E."/>
            <person name="Ambesi-Impiombato A."/>
            <person name="Apweiler R."/>
            <person name="Aturaliya R.N."/>
            <person name="Bailey T.L."/>
            <person name="Bansal M."/>
            <person name="Baxter L."/>
            <person name="Beisel K.W."/>
            <person name="Bersano T."/>
            <person name="Bono H."/>
            <person name="Chalk A.M."/>
            <person name="Chiu K.P."/>
            <person name="Choudhary V."/>
            <person name="Christoffels A."/>
            <person name="Clutterbuck D.R."/>
            <person name="Crowe M.L."/>
            <person name="Dalla E."/>
            <person name="Dalrymple B.P."/>
            <person name="de Bono B."/>
            <person name="Della Gatta G."/>
            <person name="di Bernardo D."/>
            <person name="Down T."/>
            <person name="Engstrom P."/>
            <person name="Fagiolini M."/>
            <person name="Faulkner G."/>
            <person name="Fletcher C.F."/>
            <person name="Fukushima T."/>
            <person name="Furuno M."/>
            <person name="Futaki S."/>
            <person name="Gariboldi M."/>
            <person name="Georgii-Hemming P."/>
            <person name="Gingeras T.R."/>
            <person name="Gojobori T."/>
            <person name="Green R.E."/>
            <person name="Gustincich S."/>
            <person name="Harbers M."/>
            <person name="Hayashi Y."/>
            <person name="Hensch T.K."/>
            <person name="Hirokawa N."/>
            <person name="Hill D."/>
            <person name="Huminiecki L."/>
            <person name="Iacono M."/>
            <person name="Ikeo K."/>
            <person name="Iwama A."/>
            <person name="Ishikawa T."/>
            <person name="Jakt M."/>
            <person name="Kanapin A."/>
            <person name="Katoh M."/>
            <person name="Kawasawa Y."/>
            <person name="Kelso J."/>
            <person name="Kitamura H."/>
            <person name="Kitano H."/>
            <person name="Kollias G."/>
            <person name="Krishnan S.P."/>
            <person name="Kruger A."/>
            <person name="Kummerfeld S.K."/>
            <person name="Kurochkin I.V."/>
            <person name="Lareau L.F."/>
            <person name="Lazarevic D."/>
            <person name="Lipovich L."/>
            <person name="Liu J."/>
            <person name="Liuni S."/>
            <person name="McWilliam S."/>
            <person name="Madan Babu M."/>
            <person name="Madera M."/>
            <person name="Marchionni L."/>
            <person name="Matsuda H."/>
            <person name="Matsuzawa S."/>
            <person name="Miki H."/>
            <person name="Mignone F."/>
            <person name="Miyake S."/>
            <person name="Morris K."/>
            <person name="Mottagui-Tabar S."/>
            <person name="Mulder N."/>
            <person name="Nakano N."/>
            <person name="Nakauchi H."/>
            <person name="Ng P."/>
            <person name="Nilsson R."/>
            <person name="Nishiguchi S."/>
            <person name="Nishikawa S."/>
            <person name="Nori F."/>
            <person name="Ohara O."/>
            <person name="Okazaki Y."/>
            <person name="Orlando V."/>
            <person name="Pang K.C."/>
            <person name="Pavan W.J."/>
            <person name="Pavesi G."/>
            <person name="Pesole G."/>
            <person name="Petrovsky N."/>
            <person name="Piazza S."/>
            <person name="Reed J."/>
            <person name="Reid J.F."/>
            <person name="Ring B.Z."/>
            <person name="Ringwald M."/>
            <person name="Rost B."/>
            <person name="Ruan Y."/>
            <person name="Salzberg S.L."/>
            <person name="Sandelin A."/>
            <person name="Schneider C."/>
            <person name="Schoenbach C."/>
            <person name="Sekiguchi K."/>
            <person name="Semple C.A."/>
            <person name="Seno S."/>
            <person name="Sessa L."/>
            <person name="Sheng Y."/>
            <person name="Shibata Y."/>
            <person name="Shimada H."/>
            <person name="Shimada K."/>
            <person name="Silva D."/>
            <person name="Sinclair B."/>
            <person name="Sperling S."/>
            <person name="Stupka E."/>
            <person name="Sugiura K."/>
            <person name="Sultana R."/>
            <person name="Takenaka Y."/>
            <person name="Taki K."/>
            <person name="Tammoja K."/>
            <person name="Tan S.L."/>
            <person name="Tang S."/>
            <person name="Taylor M.S."/>
            <person name="Tegner J."/>
            <person name="Teichmann S.A."/>
            <person name="Ueda H.R."/>
            <person name="van Nimwegen E."/>
            <person name="Verardo R."/>
            <person name="Wei C.L."/>
            <person name="Yagi K."/>
            <person name="Yamanishi H."/>
            <person name="Zabarovsky E."/>
            <person name="Zhu S."/>
            <person name="Zimmer A."/>
            <person name="Hide W."/>
            <person name="Bult C."/>
            <person name="Grimmond S.M."/>
            <person name="Teasdale R.D."/>
            <person name="Liu E.T."/>
            <person name="Brusic V."/>
            <person name="Quackenbush J."/>
            <person name="Wahlestedt C."/>
            <person name="Mattick J.S."/>
            <person name="Hume D.A."/>
            <person name="Kai C."/>
            <person name="Sasaki D."/>
            <person name="Tomaru Y."/>
            <person name="Fukuda S."/>
            <person name="Kanamori-Katayama M."/>
            <person name="Suzuki M."/>
            <person name="Aoki J."/>
            <person name="Arakawa T."/>
            <person name="Iida J."/>
            <person name="Imamura K."/>
            <person name="Itoh M."/>
            <person name="Kato T."/>
            <person name="Kawaji H."/>
            <person name="Kawagashira N."/>
            <person name="Kawashima T."/>
            <person name="Kojima M."/>
            <person name="Kondo S."/>
            <person name="Konno H."/>
            <person name="Nakano K."/>
            <person name="Ninomiya N."/>
            <person name="Nishio T."/>
            <person name="Okada M."/>
            <person name="Plessy C."/>
            <person name="Shibata K."/>
            <person name="Shiraki T."/>
            <person name="Suzuki S."/>
            <person name="Tagami M."/>
            <person name="Waki K."/>
            <person name="Watahiki A."/>
            <person name="Okamura-Oho Y."/>
            <person name="Suzuki H."/>
            <person name="Kawai J."/>
            <person name="Hayashizaki Y."/>
        </authorList>
    </citation>
    <scope>NUCLEOTIDE SEQUENCE [LARGE SCALE MRNA]</scope>
    <source>
        <strain>C57BL/6J</strain>
    </source>
</reference>
<reference key="3">
    <citation type="journal article" date="2004" name="Genome Res.">
        <title>The status, quality, and expansion of the NIH full-length cDNA project: the Mammalian Gene Collection (MGC).</title>
        <authorList>
            <consortium name="The MGC Project Team"/>
        </authorList>
    </citation>
    <scope>NUCLEOTIDE SEQUENCE [LARGE SCALE MRNA]</scope>
    <source>
        <strain>FVB/N</strain>
        <tissue>Kidney</tissue>
    </source>
</reference>
<reference key="4">
    <citation type="journal article" date="2010" name="Cell">
        <title>A tissue-specific atlas of mouse protein phosphorylation and expression.</title>
        <authorList>
            <person name="Huttlin E.L."/>
            <person name="Jedrychowski M.P."/>
            <person name="Elias J.E."/>
            <person name="Goswami T."/>
            <person name="Rad R."/>
            <person name="Beausoleil S.A."/>
            <person name="Villen J."/>
            <person name="Haas W."/>
            <person name="Sowa M.E."/>
            <person name="Gygi S.P."/>
        </authorList>
    </citation>
    <scope>IDENTIFICATION BY MASS SPECTROMETRY [LARGE SCALE ANALYSIS]</scope>
    <source>
        <tissue>Brain</tissue>
        <tissue>Brown adipose tissue</tissue>
        <tissue>Heart</tissue>
        <tissue>Kidney</tissue>
        <tissue>Liver</tissue>
        <tissue>Lung</tissue>
        <tissue>Pancreas</tissue>
        <tissue>Spleen</tissue>
        <tissue>Testis</tissue>
    </source>
</reference>
<gene>
    <name type="primary">Vps28</name>
</gene>
<sequence>MFHGIPATPGVGAPGNKPELYEEVKLYKNAREREKYDNMAELFAVVKTMQALEKAYIKDCVTPNEYTAACSRLLVQYKAAFRQVQGSEISSIDEFCRKFRLDCPLAMERIKEDRPITIKDDKGNLNRCIADVVSLFITVMDKLRLEIRAMDEIQPDLRELMETMHRMSHLPPDFEGRQTVSQWLQTLSGMSASDELDDSQVRQMLFDLESAYNAFNRFLHA</sequence>
<accession>Q9D1C8</accession>
<protein>
    <recommendedName>
        <fullName>Vacuolar protein sorting-associated protein 28 homolog</fullName>
    </recommendedName>
    <alternativeName>
        <fullName>Caspase-activated DNase inhibitor that interacts with ASK1</fullName>
        <shortName>CIIA</shortName>
    </alternativeName>
    <alternativeName>
        <fullName>ESCRT-I complex subunit VPS28</fullName>
    </alternativeName>
</protein>
<name>VPS28_MOUSE</name>
<keyword id="KW-0007">Acetylation</keyword>
<keyword id="KW-1003">Cell membrane</keyword>
<keyword id="KW-0967">Endosome</keyword>
<keyword id="KW-0472">Membrane</keyword>
<keyword id="KW-0653">Protein transport</keyword>
<keyword id="KW-1185">Reference proteome</keyword>
<keyword id="KW-0813">Transport</keyword>
<dbReference type="EMBL" id="AF373710">
    <property type="protein sequence ID" value="AAN71982.1"/>
    <property type="molecule type" value="mRNA"/>
</dbReference>
<dbReference type="EMBL" id="AK003699">
    <property type="protein sequence ID" value="BAB22945.1"/>
    <property type="molecule type" value="mRNA"/>
</dbReference>
<dbReference type="EMBL" id="BC013535">
    <property type="protein sequence ID" value="AAH13535.1"/>
    <property type="molecule type" value="mRNA"/>
</dbReference>
<dbReference type="CCDS" id="CCDS27579.1"/>
<dbReference type="RefSeq" id="NP_001292597.1">
    <property type="nucleotide sequence ID" value="NM_001305668.1"/>
</dbReference>
<dbReference type="RefSeq" id="NP_080118.1">
    <property type="nucleotide sequence ID" value="NM_025842.4"/>
</dbReference>
<dbReference type="BMRB" id="Q9D1C8"/>
<dbReference type="SMR" id="Q9D1C8"/>
<dbReference type="BioGRID" id="211806">
    <property type="interactions" value="42"/>
</dbReference>
<dbReference type="FunCoup" id="Q9D1C8">
    <property type="interactions" value="2826"/>
</dbReference>
<dbReference type="IntAct" id="Q9D1C8">
    <property type="interactions" value="40"/>
</dbReference>
<dbReference type="MINT" id="Q9D1C8"/>
<dbReference type="STRING" id="10090.ENSMUSP00000077856"/>
<dbReference type="GlyGen" id="Q9D1C8">
    <property type="glycosylation" value="1 site"/>
</dbReference>
<dbReference type="iPTMnet" id="Q9D1C8"/>
<dbReference type="PhosphoSitePlus" id="Q9D1C8"/>
<dbReference type="SwissPalm" id="Q9D1C8"/>
<dbReference type="jPOST" id="Q9D1C8"/>
<dbReference type="PeptideAtlas" id="Q9D1C8"/>
<dbReference type="ProteomicsDB" id="300183"/>
<dbReference type="Pumba" id="Q9D1C8"/>
<dbReference type="Antibodypedia" id="14872">
    <property type="antibodies" value="202 antibodies from 31 providers"/>
</dbReference>
<dbReference type="DNASU" id="66914"/>
<dbReference type="Ensembl" id="ENSMUST00000078803.5">
    <property type="protein sequence ID" value="ENSMUSP00000077856.4"/>
    <property type="gene ID" value="ENSMUSG00000115987.2"/>
</dbReference>
<dbReference type="GeneID" id="66914"/>
<dbReference type="KEGG" id="mmu:66914"/>
<dbReference type="UCSC" id="uc007wlc.2">
    <property type="organism name" value="mouse"/>
</dbReference>
<dbReference type="AGR" id="MGI:1914164"/>
<dbReference type="CTD" id="51160"/>
<dbReference type="MGI" id="MGI:1914164">
    <property type="gene designation" value="Vps28"/>
</dbReference>
<dbReference type="VEuPathDB" id="HostDB:ENSMUSG00000115987"/>
<dbReference type="GeneTree" id="ENSGT00390000007486"/>
<dbReference type="HOGENOM" id="CLU_076417_2_0_1"/>
<dbReference type="InParanoid" id="Q9D1C8"/>
<dbReference type="OMA" id="CDEFPTV"/>
<dbReference type="OrthoDB" id="2671at2759"/>
<dbReference type="PhylomeDB" id="Q9D1C8"/>
<dbReference type="TreeFam" id="TF313364"/>
<dbReference type="Reactome" id="R-MMU-917729">
    <property type="pathway name" value="Endosomal Sorting Complex Required For Transport (ESCRT)"/>
</dbReference>
<dbReference type="BioGRID-ORCS" id="66914">
    <property type="hits" value="13 hits in 29 CRISPR screens"/>
</dbReference>
<dbReference type="ChiTaRS" id="Vps28">
    <property type="organism name" value="mouse"/>
</dbReference>
<dbReference type="PRO" id="PR:Q9D1C8"/>
<dbReference type="Proteomes" id="UP000000589">
    <property type="component" value="Chromosome 15"/>
</dbReference>
<dbReference type="RNAct" id="Q9D1C8">
    <property type="molecule type" value="protein"/>
</dbReference>
<dbReference type="Bgee" id="ENSMUSG00000115987">
    <property type="expression patterns" value="Expressed in ankle joint and 264 other cell types or tissues"/>
</dbReference>
<dbReference type="ExpressionAtlas" id="Q9D1C8">
    <property type="expression patterns" value="baseline and differential"/>
</dbReference>
<dbReference type="GO" id="GO:0005737">
    <property type="term" value="C:cytoplasm"/>
    <property type="evidence" value="ECO:0000250"/>
    <property type="project" value="UniProtKB"/>
</dbReference>
<dbReference type="GO" id="GO:0005829">
    <property type="term" value="C:cytosol"/>
    <property type="evidence" value="ECO:0000266"/>
    <property type="project" value="MGI"/>
</dbReference>
<dbReference type="GO" id="GO:0005769">
    <property type="term" value="C:early endosome"/>
    <property type="evidence" value="ECO:0007669"/>
    <property type="project" value="Ensembl"/>
</dbReference>
<dbReference type="GO" id="GO:0005768">
    <property type="term" value="C:endosome"/>
    <property type="evidence" value="ECO:0000266"/>
    <property type="project" value="MGI"/>
</dbReference>
<dbReference type="GO" id="GO:0000813">
    <property type="term" value="C:ESCRT I complex"/>
    <property type="evidence" value="ECO:0000250"/>
    <property type="project" value="UniProtKB"/>
</dbReference>
<dbReference type="GO" id="GO:0031902">
    <property type="term" value="C:late endosome membrane"/>
    <property type="evidence" value="ECO:0007669"/>
    <property type="project" value="UniProtKB-SubCell"/>
</dbReference>
<dbReference type="GO" id="GO:0005886">
    <property type="term" value="C:plasma membrane"/>
    <property type="evidence" value="ECO:0007669"/>
    <property type="project" value="UniProtKB-SubCell"/>
</dbReference>
<dbReference type="GO" id="GO:0043130">
    <property type="term" value="F:ubiquitin binding"/>
    <property type="evidence" value="ECO:0007669"/>
    <property type="project" value="Ensembl"/>
</dbReference>
<dbReference type="GO" id="GO:0032509">
    <property type="term" value="P:endosome transport via multivesicular body sorting pathway"/>
    <property type="evidence" value="ECO:0007669"/>
    <property type="project" value="InterPro"/>
</dbReference>
<dbReference type="GO" id="GO:0031397">
    <property type="term" value="P:negative regulation of protein ubiquitination"/>
    <property type="evidence" value="ECO:0000250"/>
    <property type="project" value="UniProtKB"/>
</dbReference>
<dbReference type="GO" id="GO:0045732">
    <property type="term" value="P:positive regulation of protein catabolic process"/>
    <property type="evidence" value="ECO:0007669"/>
    <property type="project" value="Ensembl"/>
</dbReference>
<dbReference type="GO" id="GO:2000397">
    <property type="term" value="P:positive regulation of ubiquitin-dependent endocytosis"/>
    <property type="evidence" value="ECO:0007669"/>
    <property type="project" value="Ensembl"/>
</dbReference>
<dbReference type="GO" id="GO:0015031">
    <property type="term" value="P:protein transport"/>
    <property type="evidence" value="ECO:0007669"/>
    <property type="project" value="UniProtKB-KW"/>
</dbReference>
<dbReference type="GO" id="GO:0043162">
    <property type="term" value="P:ubiquitin-dependent protein catabolic process via the multivesicular body sorting pathway"/>
    <property type="evidence" value="ECO:0000250"/>
    <property type="project" value="UniProtKB"/>
</dbReference>
<dbReference type="FunFam" id="1.20.120.1130:FF:000001">
    <property type="entry name" value="Vacuolar protein sorting-associated protein 28 homolog"/>
    <property type="match status" value="1"/>
</dbReference>
<dbReference type="FunFam" id="1.20.1440.200:FF:000001">
    <property type="entry name" value="Vacuolar protein sorting-associated protein 28 homolog"/>
    <property type="match status" value="1"/>
</dbReference>
<dbReference type="Gene3D" id="1.20.120.1130">
    <property type="match status" value="1"/>
</dbReference>
<dbReference type="Gene3D" id="1.20.1440.200">
    <property type="match status" value="1"/>
</dbReference>
<dbReference type="InterPro" id="IPR037202">
    <property type="entry name" value="ESCRT_assembly_dom"/>
</dbReference>
<dbReference type="InterPro" id="IPR007143">
    <property type="entry name" value="Vps28"/>
</dbReference>
<dbReference type="InterPro" id="IPR017899">
    <property type="entry name" value="VPS28_C"/>
</dbReference>
<dbReference type="InterPro" id="IPR037206">
    <property type="entry name" value="VPS28_C_sf"/>
</dbReference>
<dbReference type="InterPro" id="IPR017898">
    <property type="entry name" value="VPS28_N"/>
</dbReference>
<dbReference type="InterPro" id="IPR038358">
    <property type="entry name" value="VPS28_N_sf"/>
</dbReference>
<dbReference type="PANTHER" id="PTHR12937">
    <property type="entry name" value="VACUOLAR PROTEIN SORTING 28, ISOFORM 2 VPS28"/>
    <property type="match status" value="1"/>
</dbReference>
<dbReference type="PANTHER" id="PTHR12937:SF0">
    <property type="entry name" value="VACUOLAR PROTEIN SORTING-ASSOCIATED PROTEIN 28 HOMOLOG"/>
    <property type="match status" value="1"/>
</dbReference>
<dbReference type="Pfam" id="PF03997">
    <property type="entry name" value="VPS28"/>
    <property type="match status" value="1"/>
</dbReference>
<dbReference type="PIRSF" id="PIRSF017535">
    <property type="entry name" value="VPS28"/>
    <property type="match status" value="1"/>
</dbReference>
<dbReference type="SUPFAM" id="SSF140111">
    <property type="entry name" value="Endosomal sorting complex assembly domain"/>
    <property type="match status" value="1"/>
</dbReference>
<dbReference type="SUPFAM" id="SSF140427">
    <property type="entry name" value="VPS28 C-terminal domain-like"/>
    <property type="match status" value="1"/>
</dbReference>
<dbReference type="PROSITE" id="PS51310">
    <property type="entry name" value="VPS28_C"/>
    <property type="match status" value="1"/>
</dbReference>
<dbReference type="PROSITE" id="PS51313">
    <property type="entry name" value="VPS28_N"/>
    <property type="match status" value="1"/>
</dbReference>
<comment type="function">
    <text evidence="1">Component of the ESCRT-I complex, a regulator of vesicular trafficking process.</text>
</comment>
<comment type="subunit">
    <text evidence="1">Component of the ESCRT-I complex (endosomal sorting complex required for transport I) which consists of TSG101, VPS28, a VPS37 protein (VPS37A to -D) and MVB12A or MVB12B in a 1:1:1:1 stoichiometry. Interacts with TSG101, VPS37B, VPS37C, MVB12A and MVB12B. Component of an ESCRT-I complex (endosomal sorting complex required for transport I) which consists of TSG101, VPS28, VPS37A and UBAP1 in a 1:1:1:1 stoichiometry. Interacts with VPS36; the interaction mediates the association with the ESCRT-II complex. Interacts with SNF8 and VPS25. Interacts with CEP55 (By similarity).</text>
</comment>
<comment type="interaction">
    <interactant intactId="EBI-309205">
        <id>Q9D1C8</id>
    </interactant>
    <interactant intactId="EBI-7365197">
        <id>O54788</id>
        <label>Dffb</label>
    </interactant>
    <organismsDiffer>false</organismsDiffer>
    <experiments>6</experiments>
</comment>
<comment type="interaction">
    <interactant intactId="EBI-309205">
        <id>Q9D1C8</id>
    </interactant>
    <interactant intactId="EBI-777493">
        <id>O35099</id>
        <label>Map3k5</label>
    </interactant>
    <organismsDiffer>false</organismsDiffer>
    <experiments>3</experiments>
</comment>
<comment type="interaction">
    <interactant intactId="EBI-309205">
        <id>Q9D1C8</id>
    </interactant>
    <interactant intactId="EBI-476263">
        <id>Q99683</id>
        <label>MAP3K5</label>
    </interactant>
    <organismsDiffer>true</organismsDiffer>
    <experiments>5</experiments>
</comment>
<comment type="subcellular location">
    <subcellularLocation>
        <location evidence="1">Cell membrane</location>
    </subcellularLocation>
    <subcellularLocation>
        <location evidence="1">Late endosome membrane</location>
        <topology evidence="1">Peripheral membrane protein</topology>
    </subcellularLocation>
</comment>
<comment type="similarity">
    <text evidence="3 4">Belongs to the VPS28 family.</text>
</comment>
<organism>
    <name type="scientific">Mus musculus</name>
    <name type="common">Mouse</name>
    <dbReference type="NCBI Taxonomy" id="10090"/>
    <lineage>
        <taxon>Eukaryota</taxon>
        <taxon>Metazoa</taxon>
        <taxon>Chordata</taxon>
        <taxon>Craniata</taxon>
        <taxon>Vertebrata</taxon>
        <taxon>Euteleostomi</taxon>
        <taxon>Mammalia</taxon>
        <taxon>Eutheria</taxon>
        <taxon>Euarchontoglires</taxon>
        <taxon>Glires</taxon>
        <taxon>Rodentia</taxon>
        <taxon>Myomorpha</taxon>
        <taxon>Muroidea</taxon>
        <taxon>Muridae</taxon>
        <taxon>Murinae</taxon>
        <taxon>Mus</taxon>
        <taxon>Mus</taxon>
    </lineage>
</organism>
<evidence type="ECO:0000250" key="1"/>
<evidence type="ECO:0000250" key="2">
    <source>
        <dbReference type="UniProtKB" id="Q9UK41"/>
    </source>
</evidence>
<evidence type="ECO:0000255" key="3">
    <source>
        <dbReference type="PROSITE-ProRule" id="PRU00642"/>
    </source>
</evidence>
<evidence type="ECO:0000255" key="4">
    <source>
        <dbReference type="PROSITE-ProRule" id="PRU00645"/>
    </source>
</evidence>
<proteinExistence type="evidence at protein level"/>